<comment type="function">
    <text evidence="1">The glycine cleavage system catalyzes the degradation of glycine.</text>
</comment>
<comment type="catalytic activity">
    <reaction evidence="1">
        <text>N(6)-[(R)-S(8)-aminomethyldihydrolipoyl]-L-lysyl-[protein] + (6S)-5,6,7,8-tetrahydrofolate = N(6)-[(R)-dihydrolipoyl]-L-lysyl-[protein] + (6R)-5,10-methylene-5,6,7,8-tetrahydrofolate + NH4(+)</text>
        <dbReference type="Rhea" id="RHEA:16945"/>
        <dbReference type="Rhea" id="RHEA-COMP:10475"/>
        <dbReference type="Rhea" id="RHEA-COMP:10492"/>
        <dbReference type="ChEBI" id="CHEBI:15636"/>
        <dbReference type="ChEBI" id="CHEBI:28938"/>
        <dbReference type="ChEBI" id="CHEBI:57453"/>
        <dbReference type="ChEBI" id="CHEBI:83100"/>
        <dbReference type="ChEBI" id="CHEBI:83143"/>
        <dbReference type="EC" id="2.1.2.10"/>
    </reaction>
</comment>
<comment type="subunit">
    <text evidence="1">The glycine cleavage system is composed of four proteins: P, T, L and H.</text>
</comment>
<comment type="similarity">
    <text evidence="1">Belongs to the GcvT family.</text>
</comment>
<accession>Q0BN73</accession>
<organism>
    <name type="scientific">Francisella tularensis subsp. holarctica (strain OSU18)</name>
    <dbReference type="NCBI Taxonomy" id="393011"/>
    <lineage>
        <taxon>Bacteria</taxon>
        <taxon>Pseudomonadati</taxon>
        <taxon>Pseudomonadota</taxon>
        <taxon>Gammaproteobacteria</taxon>
        <taxon>Thiotrichales</taxon>
        <taxon>Francisellaceae</taxon>
        <taxon>Francisella</taxon>
    </lineage>
</organism>
<name>GCST_FRATO</name>
<feature type="chain" id="PRO_1000047670" description="Aminomethyltransferase">
    <location>
        <begin position="1"/>
        <end position="358"/>
    </location>
</feature>
<keyword id="KW-0032">Aminotransferase</keyword>
<keyword id="KW-0808">Transferase</keyword>
<evidence type="ECO:0000255" key="1">
    <source>
        <dbReference type="HAMAP-Rule" id="MF_00259"/>
    </source>
</evidence>
<protein>
    <recommendedName>
        <fullName evidence="1">Aminomethyltransferase</fullName>
        <ecNumber evidence="1">2.1.2.10</ecNumber>
    </recommendedName>
    <alternativeName>
        <fullName evidence="1">Glycine cleavage system T protein</fullName>
    </alternativeName>
</protein>
<reference key="1">
    <citation type="journal article" date="2006" name="J. Bacteriol.">
        <title>Chromosome rearrangement and diversification of Francisella tularensis revealed by the type B (OSU18) genome sequence.</title>
        <authorList>
            <person name="Petrosino J.F."/>
            <person name="Xiang Q."/>
            <person name="Karpathy S.E."/>
            <person name="Jiang H."/>
            <person name="Yerrapragada S."/>
            <person name="Liu Y."/>
            <person name="Gioia J."/>
            <person name="Hemphill L."/>
            <person name="Gonzalez A."/>
            <person name="Raghavan T.M."/>
            <person name="Uzman A."/>
            <person name="Fox G.E."/>
            <person name="Highlander S."/>
            <person name="Reichard M."/>
            <person name="Morton R.J."/>
            <person name="Clinkenbeard K.D."/>
            <person name="Weinstock G.M."/>
        </authorList>
    </citation>
    <scope>NUCLEOTIDE SEQUENCE [LARGE SCALE GENOMIC DNA]</scope>
    <source>
        <strain>OSU18</strain>
    </source>
</reference>
<proteinExistence type="inferred from homology"/>
<gene>
    <name evidence="1" type="primary">gcvT</name>
    <name type="ordered locus">FTH_0475</name>
</gene>
<dbReference type="EC" id="2.1.2.10" evidence="1"/>
<dbReference type="EMBL" id="CP000437">
    <property type="protein sequence ID" value="ABI82461.1"/>
    <property type="molecule type" value="Genomic_DNA"/>
</dbReference>
<dbReference type="RefSeq" id="WP_004336875.1">
    <property type="nucleotide sequence ID" value="NC_017463.1"/>
</dbReference>
<dbReference type="SMR" id="Q0BN73"/>
<dbReference type="KEGG" id="fth:FTH_0475"/>
<dbReference type="GO" id="GO:0005829">
    <property type="term" value="C:cytosol"/>
    <property type="evidence" value="ECO:0007669"/>
    <property type="project" value="TreeGrafter"/>
</dbReference>
<dbReference type="GO" id="GO:0005960">
    <property type="term" value="C:glycine cleavage complex"/>
    <property type="evidence" value="ECO:0007669"/>
    <property type="project" value="InterPro"/>
</dbReference>
<dbReference type="GO" id="GO:0004047">
    <property type="term" value="F:aminomethyltransferase activity"/>
    <property type="evidence" value="ECO:0007669"/>
    <property type="project" value="UniProtKB-UniRule"/>
</dbReference>
<dbReference type="GO" id="GO:0008483">
    <property type="term" value="F:transaminase activity"/>
    <property type="evidence" value="ECO:0007669"/>
    <property type="project" value="UniProtKB-KW"/>
</dbReference>
<dbReference type="GO" id="GO:0019464">
    <property type="term" value="P:glycine decarboxylation via glycine cleavage system"/>
    <property type="evidence" value="ECO:0007669"/>
    <property type="project" value="UniProtKB-UniRule"/>
</dbReference>
<dbReference type="FunFam" id="3.30.70.1400:FF:000001">
    <property type="entry name" value="Aminomethyltransferase"/>
    <property type="match status" value="1"/>
</dbReference>
<dbReference type="FunFam" id="4.10.1250.10:FF:000001">
    <property type="entry name" value="Aminomethyltransferase"/>
    <property type="match status" value="1"/>
</dbReference>
<dbReference type="Gene3D" id="2.40.30.110">
    <property type="entry name" value="Aminomethyltransferase beta-barrel domains"/>
    <property type="match status" value="1"/>
</dbReference>
<dbReference type="Gene3D" id="3.30.70.1400">
    <property type="entry name" value="Aminomethyltransferase beta-barrel domains"/>
    <property type="match status" value="1"/>
</dbReference>
<dbReference type="Gene3D" id="4.10.1250.10">
    <property type="entry name" value="Aminomethyltransferase fragment"/>
    <property type="match status" value="1"/>
</dbReference>
<dbReference type="Gene3D" id="3.30.1360.120">
    <property type="entry name" value="Probable tRNA modification gtpase trme, domain 1"/>
    <property type="match status" value="1"/>
</dbReference>
<dbReference type="HAMAP" id="MF_00259">
    <property type="entry name" value="GcvT"/>
    <property type="match status" value="1"/>
</dbReference>
<dbReference type="InterPro" id="IPR006223">
    <property type="entry name" value="GCS_T"/>
</dbReference>
<dbReference type="InterPro" id="IPR022903">
    <property type="entry name" value="GCS_T_bac"/>
</dbReference>
<dbReference type="InterPro" id="IPR013977">
    <property type="entry name" value="GCST_C"/>
</dbReference>
<dbReference type="InterPro" id="IPR006222">
    <property type="entry name" value="GCV_T_N"/>
</dbReference>
<dbReference type="InterPro" id="IPR028896">
    <property type="entry name" value="GcvT/YgfZ/DmdA"/>
</dbReference>
<dbReference type="InterPro" id="IPR029043">
    <property type="entry name" value="GcvT/YgfZ_C"/>
</dbReference>
<dbReference type="InterPro" id="IPR027266">
    <property type="entry name" value="TrmE/GcvT_dom1"/>
</dbReference>
<dbReference type="NCBIfam" id="TIGR00528">
    <property type="entry name" value="gcvT"/>
    <property type="match status" value="1"/>
</dbReference>
<dbReference type="NCBIfam" id="NF001567">
    <property type="entry name" value="PRK00389.1"/>
    <property type="match status" value="1"/>
</dbReference>
<dbReference type="PANTHER" id="PTHR43757">
    <property type="entry name" value="AMINOMETHYLTRANSFERASE"/>
    <property type="match status" value="1"/>
</dbReference>
<dbReference type="PANTHER" id="PTHR43757:SF2">
    <property type="entry name" value="AMINOMETHYLTRANSFERASE, MITOCHONDRIAL"/>
    <property type="match status" value="1"/>
</dbReference>
<dbReference type="Pfam" id="PF01571">
    <property type="entry name" value="GCV_T"/>
    <property type="match status" value="1"/>
</dbReference>
<dbReference type="Pfam" id="PF08669">
    <property type="entry name" value="GCV_T_C"/>
    <property type="match status" value="1"/>
</dbReference>
<dbReference type="PIRSF" id="PIRSF006487">
    <property type="entry name" value="GcvT"/>
    <property type="match status" value="1"/>
</dbReference>
<dbReference type="SUPFAM" id="SSF101790">
    <property type="entry name" value="Aminomethyltransferase beta-barrel domain"/>
    <property type="match status" value="1"/>
</dbReference>
<dbReference type="SUPFAM" id="SSF103025">
    <property type="entry name" value="Folate-binding domain"/>
    <property type="match status" value="1"/>
</dbReference>
<sequence length="358" mass="39516">MLKTPLYESHIAANAKMIDFSGWSMPINYGSQIQEHNNVREDCGIFDVSHMLAVDIQGSEAEKFLRYLLANDVAKLQENKAQYGCMLNHDAGIVDDLITYKVTDEHFRIVVNAGNRESDVAWFNQNAQNFDVAITPQTDLAIVAVQGPKAVAVIKRVVTKEIAAEIEALLPFSFKFFSKWMVARTGYTGEDGFEVILPATQVKKFWDSLLENGAQPAGLGARDTLRLEAGMHLYGADMDTSTTPLERGLGWSVDLSDEHRDFIGKKAYLAKKAQGVDTKWVGVVLKTKGVLRAGQEIDFDNGEKGYITSGSFSPTLKVAIGLAYVPKQADNPVVNIRGKELEVELVKPKFVKNGKSLI</sequence>